<sequence>MSLGVIAAAIAIGLSALGAGIGNGLIVSRTIEGVARQPELKGALQTIMFIGVALVEALPIIGVVIAFIVMNK</sequence>
<protein>
    <recommendedName>
        <fullName evidence="1">ATP synthase subunit c</fullName>
    </recommendedName>
    <alternativeName>
        <fullName evidence="1">ATP synthase F(0) sector subunit c</fullName>
    </alternativeName>
    <alternativeName>
        <fullName evidence="1">F-type ATPase subunit c</fullName>
        <shortName evidence="1">F-ATPase subunit c</shortName>
    </alternativeName>
    <alternativeName>
        <fullName evidence="1">Lipid-binding protein</fullName>
    </alternativeName>
</protein>
<organism>
    <name type="scientific">Bacillus anthracis (strain A0248)</name>
    <dbReference type="NCBI Taxonomy" id="592021"/>
    <lineage>
        <taxon>Bacteria</taxon>
        <taxon>Bacillati</taxon>
        <taxon>Bacillota</taxon>
        <taxon>Bacilli</taxon>
        <taxon>Bacillales</taxon>
        <taxon>Bacillaceae</taxon>
        <taxon>Bacillus</taxon>
        <taxon>Bacillus cereus group</taxon>
    </lineage>
</organism>
<feature type="chain" id="PRO_1000184323" description="ATP synthase subunit c">
    <location>
        <begin position="1"/>
        <end position="72"/>
    </location>
</feature>
<feature type="transmembrane region" description="Helical" evidence="1">
    <location>
        <begin position="1"/>
        <end position="21"/>
    </location>
</feature>
<feature type="transmembrane region" description="Helical" evidence="1">
    <location>
        <begin position="49"/>
        <end position="69"/>
    </location>
</feature>
<feature type="site" description="Reversibly protonated during proton transport" evidence="1">
    <location>
        <position position="56"/>
    </location>
</feature>
<comment type="function">
    <text evidence="1">F(1)F(0) ATP synthase produces ATP from ADP in the presence of a proton or sodium gradient. F-type ATPases consist of two structural domains, F(1) containing the extramembraneous catalytic core and F(0) containing the membrane proton channel, linked together by a central stalk and a peripheral stalk. During catalysis, ATP synthesis in the catalytic domain of F(1) is coupled via a rotary mechanism of the central stalk subunits to proton translocation.</text>
</comment>
<comment type="function">
    <text evidence="1">Key component of the F(0) channel; it plays a direct role in translocation across the membrane. A homomeric c-ring of between 10-14 subunits forms the central stalk rotor element with the F(1) delta and epsilon subunits.</text>
</comment>
<comment type="subunit">
    <text evidence="1">F-type ATPases have 2 components, F(1) - the catalytic core - and F(0) - the membrane proton channel. F(1) has five subunits: alpha(3), beta(3), gamma(1), delta(1), epsilon(1). F(0) has three main subunits: a(1), b(2) and c(10-14). The alpha and beta chains form an alternating ring which encloses part of the gamma chain. F(1) is attached to F(0) by a central stalk formed by the gamma and epsilon chains, while a peripheral stalk is formed by the delta and b chains.</text>
</comment>
<comment type="subcellular location">
    <subcellularLocation>
        <location evidence="1">Cell membrane</location>
        <topology evidence="1">Multi-pass membrane protein</topology>
    </subcellularLocation>
</comment>
<comment type="similarity">
    <text evidence="1">Belongs to the ATPase C chain family.</text>
</comment>
<gene>
    <name evidence="1" type="primary">atpE</name>
    <name type="ordered locus">BAA_5580</name>
</gene>
<keyword id="KW-0066">ATP synthesis</keyword>
<keyword id="KW-1003">Cell membrane</keyword>
<keyword id="KW-0138">CF(0)</keyword>
<keyword id="KW-0375">Hydrogen ion transport</keyword>
<keyword id="KW-0406">Ion transport</keyword>
<keyword id="KW-0446">Lipid-binding</keyword>
<keyword id="KW-0472">Membrane</keyword>
<keyword id="KW-0812">Transmembrane</keyword>
<keyword id="KW-1133">Transmembrane helix</keyword>
<keyword id="KW-0813">Transport</keyword>
<reference key="1">
    <citation type="submission" date="2009-04" db="EMBL/GenBank/DDBJ databases">
        <title>Genome sequence of Bacillus anthracis A0248.</title>
        <authorList>
            <person name="Dodson R.J."/>
            <person name="Munk A.C."/>
            <person name="Bruce D."/>
            <person name="Detter C."/>
            <person name="Tapia R."/>
            <person name="Sutton G."/>
            <person name="Sims D."/>
            <person name="Brettin T."/>
        </authorList>
    </citation>
    <scope>NUCLEOTIDE SEQUENCE [LARGE SCALE GENOMIC DNA]</scope>
    <source>
        <strain>A0248</strain>
    </source>
</reference>
<accession>C3P1F9</accession>
<name>ATPL_BACAA</name>
<evidence type="ECO:0000255" key="1">
    <source>
        <dbReference type="HAMAP-Rule" id="MF_01396"/>
    </source>
</evidence>
<proteinExistence type="inferred from homology"/>
<dbReference type="EMBL" id="CP001598">
    <property type="protein sequence ID" value="ACQ47045.1"/>
    <property type="molecule type" value="Genomic_DNA"/>
</dbReference>
<dbReference type="RefSeq" id="WP_000052064.1">
    <property type="nucleotide sequence ID" value="NC_012659.1"/>
</dbReference>
<dbReference type="SMR" id="C3P1F9"/>
<dbReference type="GeneID" id="93005813"/>
<dbReference type="KEGG" id="bai:BAA_5580"/>
<dbReference type="HOGENOM" id="CLU_148047_1_1_9"/>
<dbReference type="GO" id="GO:0005886">
    <property type="term" value="C:plasma membrane"/>
    <property type="evidence" value="ECO:0007669"/>
    <property type="project" value="UniProtKB-SubCell"/>
</dbReference>
<dbReference type="GO" id="GO:0045259">
    <property type="term" value="C:proton-transporting ATP synthase complex"/>
    <property type="evidence" value="ECO:0007669"/>
    <property type="project" value="UniProtKB-KW"/>
</dbReference>
<dbReference type="GO" id="GO:0033177">
    <property type="term" value="C:proton-transporting two-sector ATPase complex, proton-transporting domain"/>
    <property type="evidence" value="ECO:0007669"/>
    <property type="project" value="InterPro"/>
</dbReference>
<dbReference type="GO" id="GO:0008289">
    <property type="term" value="F:lipid binding"/>
    <property type="evidence" value="ECO:0007669"/>
    <property type="project" value="UniProtKB-KW"/>
</dbReference>
<dbReference type="GO" id="GO:0046933">
    <property type="term" value="F:proton-transporting ATP synthase activity, rotational mechanism"/>
    <property type="evidence" value="ECO:0007669"/>
    <property type="project" value="UniProtKB-UniRule"/>
</dbReference>
<dbReference type="CDD" id="cd18185">
    <property type="entry name" value="ATP-synt_Fo_c_ATPE"/>
    <property type="match status" value="1"/>
</dbReference>
<dbReference type="FunFam" id="1.20.20.10:FF:000004">
    <property type="entry name" value="ATP synthase subunit c"/>
    <property type="match status" value="1"/>
</dbReference>
<dbReference type="Gene3D" id="1.20.20.10">
    <property type="entry name" value="F1F0 ATP synthase subunit C"/>
    <property type="match status" value="1"/>
</dbReference>
<dbReference type="HAMAP" id="MF_01396">
    <property type="entry name" value="ATP_synth_c_bact"/>
    <property type="match status" value="1"/>
</dbReference>
<dbReference type="InterPro" id="IPR005953">
    <property type="entry name" value="ATP_synth_csu_bac/chlpt"/>
</dbReference>
<dbReference type="InterPro" id="IPR000454">
    <property type="entry name" value="ATP_synth_F0_csu"/>
</dbReference>
<dbReference type="InterPro" id="IPR020537">
    <property type="entry name" value="ATP_synth_F0_csu_DDCD_BS"/>
</dbReference>
<dbReference type="InterPro" id="IPR038662">
    <property type="entry name" value="ATP_synth_F0_csu_sf"/>
</dbReference>
<dbReference type="InterPro" id="IPR002379">
    <property type="entry name" value="ATPase_proteolipid_c-like_dom"/>
</dbReference>
<dbReference type="InterPro" id="IPR035921">
    <property type="entry name" value="F/V-ATP_Csub_sf"/>
</dbReference>
<dbReference type="NCBIfam" id="TIGR01260">
    <property type="entry name" value="ATP_synt_c"/>
    <property type="match status" value="1"/>
</dbReference>
<dbReference type="NCBIfam" id="NF005363">
    <property type="entry name" value="PRK06876.1"/>
    <property type="match status" value="1"/>
</dbReference>
<dbReference type="PANTHER" id="PTHR10031">
    <property type="entry name" value="ATP SYNTHASE LIPID-BINDING PROTEIN, MITOCHONDRIAL"/>
    <property type="match status" value="1"/>
</dbReference>
<dbReference type="PANTHER" id="PTHR10031:SF0">
    <property type="entry name" value="ATPASE PROTEIN 9"/>
    <property type="match status" value="1"/>
</dbReference>
<dbReference type="Pfam" id="PF00137">
    <property type="entry name" value="ATP-synt_C"/>
    <property type="match status" value="1"/>
</dbReference>
<dbReference type="PRINTS" id="PR00124">
    <property type="entry name" value="ATPASEC"/>
</dbReference>
<dbReference type="SUPFAM" id="SSF81333">
    <property type="entry name" value="F1F0 ATP synthase subunit C"/>
    <property type="match status" value="1"/>
</dbReference>
<dbReference type="PROSITE" id="PS00605">
    <property type="entry name" value="ATPASE_C"/>
    <property type="match status" value="1"/>
</dbReference>